<keyword id="KW-1003">Cell membrane</keyword>
<keyword id="KW-0169">Cobalamin biosynthesis</keyword>
<keyword id="KW-0460">Magnesium</keyword>
<keyword id="KW-0472">Membrane</keyword>
<keyword id="KW-1185">Reference proteome</keyword>
<keyword id="KW-0808">Transferase</keyword>
<keyword id="KW-0812">Transmembrane</keyword>
<keyword id="KW-1133">Transmembrane helix</keyword>
<proteinExistence type="inferred from homology"/>
<sequence length="255" mass="28007">MKGLRSAFSFFTIIPIKSELDEHLIAYVPLVALFDAALAASLYVAIYGISKLLASFISVSAIYIVNGLNHVDAVADAGDAMMIRNRSRIREVFEDHDVGAGGVFTLIFVYLLALISLSSMDLYIGIFSIILAEFLSKSMMMITLHRSRPLFQGIGSLFIDLYRKHDSLYTVEFVVIPIVLALLSRASIMISVALAFLIFIIVKMAVIRRFGGINGDLAGFIGELGRSIFLMISLIMAQSSVLSTYDILSKIMSSL</sequence>
<comment type="function">
    <text evidence="1">Joins adenosylcobinamide-GDP and alpha-ribazole to generate adenosylcobalamin (Ado-cobalamin). Also synthesizes adenosylcobalamin 5'-phosphate from adenosylcobinamide-GDP and alpha-ribazole 5'-phosphate.</text>
</comment>
<comment type="catalytic activity">
    <reaction evidence="1">
        <text>alpha-ribazole + adenosylcob(III)inamide-GDP = adenosylcob(III)alamin + GMP + H(+)</text>
        <dbReference type="Rhea" id="RHEA:16049"/>
        <dbReference type="ChEBI" id="CHEBI:10329"/>
        <dbReference type="ChEBI" id="CHEBI:15378"/>
        <dbReference type="ChEBI" id="CHEBI:18408"/>
        <dbReference type="ChEBI" id="CHEBI:58115"/>
        <dbReference type="ChEBI" id="CHEBI:60487"/>
        <dbReference type="EC" id="2.7.8.26"/>
    </reaction>
</comment>
<comment type="catalytic activity">
    <reaction evidence="1">
        <text>alpha-ribazole 5'-phosphate + adenosylcob(III)inamide-GDP = adenosylcob(III)alamin 5'-phosphate + GMP + H(+)</text>
        <dbReference type="Rhea" id="RHEA:23560"/>
        <dbReference type="ChEBI" id="CHEBI:15378"/>
        <dbReference type="ChEBI" id="CHEBI:57918"/>
        <dbReference type="ChEBI" id="CHEBI:58115"/>
        <dbReference type="ChEBI" id="CHEBI:60487"/>
        <dbReference type="ChEBI" id="CHEBI:60493"/>
        <dbReference type="EC" id="2.7.8.26"/>
    </reaction>
</comment>
<comment type="cofactor">
    <cofactor evidence="1">
        <name>Mg(2+)</name>
        <dbReference type="ChEBI" id="CHEBI:18420"/>
    </cofactor>
</comment>
<comment type="pathway">
    <text evidence="1">Cofactor biosynthesis; adenosylcobalamin biosynthesis; adenosylcobalamin from cob(II)yrinate a,c-diamide: step 7/7.</text>
</comment>
<comment type="subcellular location">
    <subcellularLocation>
        <location evidence="1">Cell membrane</location>
        <topology evidence="1">Multi-pass membrane protein</topology>
    </subcellularLocation>
</comment>
<comment type="similarity">
    <text evidence="1">Belongs to the CobS family.</text>
</comment>
<feature type="chain" id="PRO_0000146923" description="Adenosylcobinamide-GDP ribazoletransferase">
    <location>
        <begin position="1"/>
        <end position="255"/>
    </location>
</feature>
<feature type="transmembrane region" description="Helical" evidence="1">
    <location>
        <begin position="24"/>
        <end position="44"/>
    </location>
</feature>
<feature type="transmembrane region" description="Helical" evidence="1">
    <location>
        <begin position="45"/>
        <end position="65"/>
    </location>
</feature>
<feature type="transmembrane region" description="Helical" evidence="1">
    <location>
        <begin position="98"/>
        <end position="118"/>
    </location>
</feature>
<feature type="transmembrane region" description="Helical" evidence="1">
    <location>
        <begin position="122"/>
        <end position="142"/>
    </location>
</feature>
<feature type="transmembrane region" description="Helical" evidence="1">
    <location>
        <begin position="164"/>
        <end position="184"/>
    </location>
</feature>
<feature type="transmembrane region" description="Helical" evidence="1">
    <location>
        <begin position="187"/>
        <end position="207"/>
    </location>
</feature>
<organism>
    <name type="scientific">Thermoplasma acidophilum (strain ATCC 25905 / DSM 1728 / JCM 9062 / NBRC 15155 / AMRC-C165)</name>
    <dbReference type="NCBI Taxonomy" id="273075"/>
    <lineage>
        <taxon>Archaea</taxon>
        <taxon>Methanobacteriati</taxon>
        <taxon>Thermoplasmatota</taxon>
        <taxon>Thermoplasmata</taxon>
        <taxon>Thermoplasmatales</taxon>
        <taxon>Thermoplasmataceae</taxon>
        <taxon>Thermoplasma</taxon>
    </lineage>
</organism>
<dbReference type="EC" id="2.7.8.26" evidence="1"/>
<dbReference type="EMBL" id="AL445066">
    <property type="protein sequence ID" value="CAC12207.1"/>
    <property type="molecule type" value="Genomic_DNA"/>
</dbReference>
<dbReference type="RefSeq" id="WP_010901490.1">
    <property type="nucleotide sequence ID" value="NC_002578.1"/>
</dbReference>
<dbReference type="FunCoup" id="Q9HJ91">
    <property type="interactions" value="56"/>
</dbReference>
<dbReference type="STRING" id="273075.gene:9572300"/>
<dbReference type="PaxDb" id="273075-Ta1079"/>
<dbReference type="EnsemblBacteria" id="CAC12207">
    <property type="protein sequence ID" value="CAC12207"/>
    <property type="gene ID" value="CAC12207"/>
</dbReference>
<dbReference type="KEGG" id="tac:Ta1079"/>
<dbReference type="eggNOG" id="arCOG04338">
    <property type="taxonomic scope" value="Archaea"/>
</dbReference>
<dbReference type="HOGENOM" id="CLU_057426_2_0_2"/>
<dbReference type="InParanoid" id="Q9HJ91"/>
<dbReference type="OrthoDB" id="11748at2157"/>
<dbReference type="UniPathway" id="UPA00148">
    <property type="reaction ID" value="UER00238"/>
</dbReference>
<dbReference type="Proteomes" id="UP000001024">
    <property type="component" value="Chromosome"/>
</dbReference>
<dbReference type="GO" id="GO:0005886">
    <property type="term" value="C:plasma membrane"/>
    <property type="evidence" value="ECO:0007669"/>
    <property type="project" value="UniProtKB-SubCell"/>
</dbReference>
<dbReference type="GO" id="GO:0051073">
    <property type="term" value="F:adenosylcobinamide-GDP ribazoletransferase activity"/>
    <property type="evidence" value="ECO:0007669"/>
    <property type="project" value="UniProtKB-UniRule"/>
</dbReference>
<dbReference type="GO" id="GO:0008818">
    <property type="term" value="F:cobalamin 5'-phosphate synthase activity"/>
    <property type="evidence" value="ECO:0007669"/>
    <property type="project" value="UniProtKB-UniRule"/>
</dbReference>
<dbReference type="GO" id="GO:0009236">
    <property type="term" value="P:cobalamin biosynthetic process"/>
    <property type="evidence" value="ECO:0007669"/>
    <property type="project" value="UniProtKB-UniRule"/>
</dbReference>
<dbReference type="HAMAP" id="MF_00719">
    <property type="entry name" value="CobS"/>
    <property type="match status" value="1"/>
</dbReference>
<dbReference type="InterPro" id="IPR003805">
    <property type="entry name" value="CobS"/>
</dbReference>
<dbReference type="NCBIfam" id="TIGR00317">
    <property type="entry name" value="cobS"/>
    <property type="match status" value="1"/>
</dbReference>
<dbReference type="PANTHER" id="PTHR34148">
    <property type="entry name" value="ADENOSYLCOBINAMIDE-GDP RIBAZOLETRANSFERASE"/>
    <property type="match status" value="1"/>
</dbReference>
<dbReference type="PANTHER" id="PTHR34148:SF1">
    <property type="entry name" value="ADENOSYLCOBINAMIDE-GDP RIBAZOLETRANSFERASE"/>
    <property type="match status" value="1"/>
</dbReference>
<dbReference type="Pfam" id="PF02654">
    <property type="entry name" value="CobS"/>
    <property type="match status" value="1"/>
</dbReference>
<reference key="1">
    <citation type="journal article" date="2000" name="Nature">
        <title>The genome sequence of the thermoacidophilic scavenger Thermoplasma acidophilum.</title>
        <authorList>
            <person name="Ruepp A."/>
            <person name="Graml W."/>
            <person name="Santos-Martinez M.-L."/>
            <person name="Koretke K.K."/>
            <person name="Volker C."/>
            <person name="Mewes H.-W."/>
            <person name="Frishman D."/>
            <person name="Stocker S."/>
            <person name="Lupas A.N."/>
            <person name="Baumeister W."/>
        </authorList>
    </citation>
    <scope>NUCLEOTIDE SEQUENCE [LARGE SCALE GENOMIC DNA]</scope>
    <source>
        <strain>ATCC 25905 / DSM 1728 / JCM 9062 / NBRC 15155 / AMRC-C165</strain>
    </source>
</reference>
<name>COBS_THEAC</name>
<accession>Q9HJ91</accession>
<protein>
    <recommendedName>
        <fullName evidence="1">Adenosylcobinamide-GDP ribazoletransferase</fullName>
        <ecNumber evidence="1">2.7.8.26</ecNumber>
    </recommendedName>
    <alternativeName>
        <fullName evidence="1">Cobalamin synthase</fullName>
    </alternativeName>
    <alternativeName>
        <fullName evidence="1">Cobalamin-5'-phosphate synthase</fullName>
    </alternativeName>
</protein>
<gene>
    <name evidence="1" type="primary">cobS</name>
    <name type="ordered locus">Ta1079</name>
</gene>
<evidence type="ECO:0000255" key="1">
    <source>
        <dbReference type="HAMAP-Rule" id="MF_00719"/>
    </source>
</evidence>